<feature type="chain" id="PRO_0000382490" description="Probable cytosolic iron-sulfur protein assembly protein Ciao1">
    <location>
        <begin position="1"/>
        <end position="335"/>
    </location>
</feature>
<feature type="repeat" description="WD 1">
    <location>
        <begin position="12"/>
        <end position="51"/>
    </location>
</feature>
<feature type="repeat" description="WD 2">
    <location>
        <begin position="57"/>
        <end position="96"/>
    </location>
</feature>
<feature type="repeat" description="WD 3">
    <location>
        <begin position="101"/>
        <end position="140"/>
    </location>
</feature>
<feature type="repeat" description="WD 4">
    <location>
        <begin position="146"/>
        <end position="185"/>
    </location>
</feature>
<feature type="repeat" description="WD 5">
    <location>
        <begin position="192"/>
        <end position="231"/>
    </location>
</feature>
<feature type="repeat" description="WD 6">
    <location>
        <begin position="250"/>
        <end position="289"/>
    </location>
</feature>
<feature type="repeat" description="WD 7">
    <location>
        <begin position="301"/>
        <end position="335"/>
    </location>
</feature>
<gene>
    <name evidence="1" type="primary">Ciao1</name>
    <name type="ORF">GM20174</name>
</gene>
<proteinExistence type="inferred from homology"/>
<accession>B4HRQ6</accession>
<protein>
    <recommendedName>
        <fullName evidence="1">Probable cytosolic iron-sulfur protein assembly protein Ciao1</fullName>
    </recommendedName>
</protein>
<organism>
    <name type="scientific">Drosophila sechellia</name>
    <name type="common">Fruit fly</name>
    <dbReference type="NCBI Taxonomy" id="7238"/>
    <lineage>
        <taxon>Eukaryota</taxon>
        <taxon>Metazoa</taxon>
        <taxon>Ecdysozoa</taxon>
        <taxon>Arthropoda</taxon>
        <taxon>Hexapoda</taxon>
        <taxon>Insecta</taxon>
        <taxon>Pterygota</taxon>
        <taxon>Neoptera</taxon>
        <taxon>Endopterygota</taxon>
        <taxon>Diptera</taxon>
        <taxon>Brachycera</taxon>
        <taxon>Muscomorpha</taxon>
        <taxon>Ephydroidea</taxon>
        <taxon>Drosophilidae</taxon>
        <taxon>Drosophila</taxon>
        <taxon>Sophophora</taxon>
    </lineage>
</organism>
<evidence type="ECO:0000255" key="1">
    <source>
        <dbReference type="HAMAP-Rule" id="MF_03037"/>
    </source>
</evidence>
<name>CIAO1_DROSE</name>
<sequence>MGRLILEHTLQGHKGRIWGVAWHPKGNVFASCGEDKAIRIWSLTGNTWGTKTILSDGHKRTIREIRWSPCGQYLASASFDATTAIWSKSSGEFECNATLEGHENEVKSVSWSRSGGLLATCSRDKSVWIWEVAGDDEFECAAVLNPHTQDVKRVVWHPTKDVLASASYDNTIKMFAEEPIDNDWDCTATLTSHTSTVWGIDFDADGERLVSCSDDTTIKIWRAYHPGNTAGVATPEQQTVWKCVCTVSGQHSRAIYDVSWCKLTGLIATACGDDGIRIFKETSDSKPDEPTFEQITAEEGAHDQDVNSVQWNPVVAGQLISCSDDGTIKIWKVSE</sequence>
<reference key="1">
    <citation type="journal article" date="2007" name="Nature">
        <title>Evolution of genes and genomes on the Drosophila phylogeny.</title>
        <authorList>
            <consortium name="Drosophila 12 genomes consortium"/>
        </authorList>
    </citation>
    <scope>NUCLEOTIDE SEQUENCE [LARGE SCALE GENOMIC DNA]</scope>
    <source>
        <strain>Rob3c / Tucson 14021-0248.25</strain>
    </source>
</reference>
<comment type="function">
    <text evidence="1">Essential component of the cytosolic iron-sulfur (Fe/S) protein assembly machinery. Required for the maturation of extramitochondrial Fe/S proteins.</text>
</comment>
<comment type="similarity">
    <text evidence="1">Belongs to the WD repeat CIA1 family.</text>
</comment>
<dbReference type="EMBL" id="CH480816">
    <property type="protein sequence ID" value="EDW47920.1"/>
    <property type="molecule type" value="Genomic_DNA"/>
</dbReference>
<dbReference type="SMR" id="B4HRQ6"/>
<dbReference type="STRING" id="7238.B4HRQ6"/>
<dbReference type="EnsemblMetazoa" id="FBtr0203159">
    <property type="protein sequence ID" value="FBpp0201651"/>
    <property type="gene ID" value="FBgn0175057"/>
</dbReference>
<dbReference type="EnsemblMetazoa" id="XM_002033871.2">
    <property type="protein sequence ID" value="XP_002033907.1"/>
    <property type="gene ID" value="LOC6609216"/>
</dbReference>
<dbReference type="GeneID" id="6609216"/>
<dbReference type="KEGG" id="dse:6609216"/>
<dbReference type="CTD" id="9391"/>
<dbReference type="HOGENOM" id="CLU_000288_57_8_1"/>
<dbReference type="OMA" id="IREIRWS"/>
<dbReference type="OrthoDB" id="339at7215"/>
<dbReference type="PhylomeDB" id="B4HRQ6"/>
<dbReference type="Proteomes" id="UP000001292">
    <property type="component" value="Unassembled WGS sequence"/>
</dbReference>
<dbReference type="GO" id="GO:0097361">
    <property type="term" value="C:cytosolic [4Fe-4S] assembly targeting complex"/>
    <property type="evidence" value="ECO:0007669"/>
    <property type="project" value="EnsemblMetazoa"/>
</dbReference>
<dbReference type="GO" id="GO:1902695">
    <property type="term" value="C:metallochaperone complex"/>
    <property type="evidence" value="ECO:0007669"/>
    <property type="project" value="EnsemblMetazoa"/>
</dbReference>
<dbReference type="GO" id="GO:0016226">
    <property type="term" value="P:iron-sulfur cluster assembly"/>
    <property type="evidence" value="ECO:0007669"/>
    <property type="project" value="UniProtKB-UniRule"/>
</dbReference>
<dbReference type="GO" id="GO:0051604">
    <property type="term" value="P:protein maturation"/>
    <property type="evidence" value="ECO:0000250"/>
    <property type="project" value="UniProtKB"/>
</dbReference>
<dbReference type="CDD" id="cd00200">
    <property type="entry name" value="WD40"/>
    <property type="match status" value="1"/>
</dbReference>
<dbReference type="FunFam" id="2.130.10.10:FF:000136">
    <property type="entry name" value="Probable cytosolic iron-sulfur protein assembly protein CIAO1"/>
    <property type="match status" value="1"/>
</dbReference>
<dbReference type="Gene3D" id="2.130.10.10">
    <property type="entry name" value="YVTN repeat-like/Quinoprotein amine dehydrogenase"/>
    <property type="match status" value="1"/>
</dbReference>
<dbReference type="HAMAP" id="MF_03037">
    <property type="entry name" value="ciao1"/>
    <property type="match status" value="1"/>
</dbReference>
<dbReference type="InterPro" id="IPR028608">
    <property type="entry name" value="CIAO1/Cia1"/>
</dbReference>
<dbReference type="InterPro" id="IPR020472">
    <property type="entry name" value="G-protein_beta_WD-40_rep"/>
</dbReference>
<dbReference type="InterPro" id="IPR015943">
    <property type="entry name" value="WD40/YVTN_repeat-like_dom_sf"/>
</dbReference>
<dbReference type="InterPro" id="IPR019775">
    <property type="entry name" value="WD40_repeat_CS"/>
</dbReference>
<dbReference type="InterPro" id="IPR036322">
    <property type="entry name" value="WD40_repeat_dom_sf"/>
</dbReference>
<dbReference type="InterPro" id="IPR001680">
    <property type="entry name" value="WD40_rpt"/>
</dbReference>
<dbReference type="PANTHER" id="PTHR19920:SF0">
    <property type="entry name" value="CYTOSOLIC IRON-SULFUR PROTEIN ASSEMBLY PROTEIN CIAO1-RELATED"/>
    <property type="match status" value="1"/>
</dbReference>
<dbReference type="PANTHER" id="PTHR19920">
    <property type="entry name" value="WD40 PROTEIN CIAO1"/>
    <property type="match status" value="1"/>
</dbReference>
<dbReference type="Pfam" id="PF00400">
    <property type="entry name" value="WD40"/>
    <property type="match status" value="7"/>
</dbReference>
<dbReference type="PRINTS" id="PR00320">
    <property type="entry name" value="GPROTEINBRPT"/>
</dbReference>
<dbReference type="SMART" id="SM00320">
    <property type="entry name" value="WD40"/>
    <property type="match status" value="7"/>
</dbReference>
<dbReference type="SUPFAM" id="SSF50978">
    <property type="entry name" value="WD40 repeat-like"/>
    <property type="match status" value="1"/>
</dbReference>
<dbReference type="PROSITE" id="PS00678">
    <property type="entry name" value="WD_REPEATS_1"/>
    <property type="match status" value="1"/>
</dbReference>
<dbReference type="PROSITE" id="PS50082">
    <property type="entry name" value="WD_REPEATS_2"/>
    <property type="match status" value="6"/>
</dbReference>
<dbReference type="PROSITE" id="PS50294">
    <property type="entry name" value="WD_REPEATS_REGION"/>
    <property type="match status" value="1"/>
</dbReference>
<keyword id="KW-1185">Reference proteome</keyword>
<keyword id="KW-0677">Repeat</keyword>
<keyword id="KW-0853">WD repeat</keyword>